<organism>
    <name type="scientific">Citrifermentans bemidjiense (strain ATCC BAA-1014 / DSM 16622 / JCM 12645 / Bem)</name>
    <name type="common">Geobacter bemidjiensis</name>
    <dbReference type="NCBI Taxonomy" id="404380"/>
    <lineage>
        <taxon>Bacteria</taxon>
        <taxon>Pseudomonadati</taxon>
        <taxon>Thermodesulfobacteriota</taxon>
        <taxon>Desulfuromonadia</taxon>
        <taxon>Geobacterales</taxon>
        <taxon>Geobacteraceae</taxon>
        <taxon>Citrifermentans</taxon>
    </lineage>
</organism>
<comment type="function">
    <text evidence="1">Methyltransferase required for the conversion of demethylmenaquinol (DMKH2) to menaquinol (MKH2) and the conversion of 2-polyprenyl-6-methoxy-1,4-benzoquinol (DDMQH2) to 2-polyprenyl-3-methyl-6-methoxy-1,4-benzoquinol (DMQH2).</text>
</comment>
<comment type="catalytic activity">
    <reaction evidence="1">
        <text>a 2-demethylmenaquinol + S-adenosyl-L-methionine = a menaquinol + S-adenosyl-L-homocysteine + H(+)</text>
        <dbReference type="Rhea" id="RHEA:42640"/>
        <dbReference type="Rhea" id="RHEA-COMP:9539"/>
        <dbReference type="Rhea" id="RHEA-COMP:9563"/>
        <dbReference type="ChEBI" id="CHEBI:15378"/>
        <dbReference type="ChEBI" id="CHEBI:18151"/>
        <dbReference type="ChEBI" id="CHEBI:55437"/>
        <dbReference type="ChEBI" id="CHEBI:57856"/>
        <dbReference type="ChEBI" id="CHEBI:59789"/>
        <dbReference type="EC" id="2.1.1.163"/>
    </reaction>
</comment>
<comment type="catalytic activity">
    <reaction evidence="1">
        <text>a 2-methoxy-6-(all-trans-polyprenyl)benzene-1,4-diol + S-adenosyl-L-methionine = a 5-methoxy-2-methyl-3-(all-trans-polyprenyl)benzene-1,4-diol + S-adenosyl-L-homocysteine + H(+)</text>
        <dbReference type="Rhea" id="RHEA:28286"/>
        <dbReference type="Rhea" id="RHEA-COMP:10858"/>
        <dbReference type="Rhea" id="RHEA-COMP:10859"/>
        <dbReference type="ChEBI" id="CHEBI:15378"/>
        <dbReference type="ChEBI" id="CHEBI:57856"/>
        <dbReference type="ChEBI" id="CHEBI:59789"/>
        <dbReference type="ChEBI" id="CHEBI:84166"/>
        <dbReference type="ChEBI" id="CHEBI:84167"/>
        <dbReference type="EC" id="2.1.1.201"/>
    </reaction>
</comment>
<comment type="pathway">
    <text evidence="1">Quinol/quinone metabolism; menaquinone biosynthesis; menaquinol from 1,4-dihydroxy-2-naphthoate: step 2/2.</text>
</comment>
<comment type="pathway">
    <text evidence="1">Cofactor biosynthesis; ubiquinone biosynthesis.</text>
</comment>
<comment type="similarity">
    <text evidence="1">Belongs to the class I-like SAM-binding methyltransferase superfamily. MenG/UbiE family.</text>
</comment>
<accession>B5EFL1</accession>
<dbReference type="EC" id="2.1.1.163" evidence="1"/>
<dbReference type="EC" id="2.1.1.201" evidence="1"/>
<dbReference type="EMBL" id="CP001124">
    <property type="protein sequence ID" value="ACH37915.1"/>
    <property type="molecule type" value="Genomic_DNA"/>
</dbReference>
<dbReference type="RefSeq" id="WP_012529327.1">
    <property type="nucleotide sequence ID" value="NC_011146.1"/>
</dbReference>
<dbReference type="SMR" id="B5EFL1"/>
<dbReference type="STRING" id="404380.Gbem_0894"/>
<dbReference type="KEGG" id="gbm:Gbem_0894"/>
<dbReference type="eggNOG" id="COG2226">
    <property type="taxonomic scope" value="Bacteria"/>
</dbReference>
<dbReference type="HOGENOM" id="CLU_037990_0_0_7"/>
<dbReference type="OrthoDB" id="9808140at2"/>
<dbReference type="UniPathway" id="UPA00079">
    <property type="reaction ID" value="UER00169"/>
</dbReference>
<dbReference type="UniPathway" id="UPA00232"/>
<dbReference type="Proteomes" id="UP000008825">
    <property type="component" value="Chromosome"/>
</dbReference>
<dbReference type="GO" id="GO:0008425">
    <property type="term" value="F:2-methoxy-6-polyprenyl-1,4-benzoquinol methyltransferase activity"/>
    <property type="evidence" value="ECO:0007669"/>
    <property type="project" value="UniProtKB-EC"/>
</dbReference>
<dbReference type="GO" id="GO:0043770">
    <property type="term" value="F:demethylmenaquinone methyltransferase activity"/>
    <property type="evidence" value="ECO:0007669"/>
    <property type="project" value="UniProtKB-UniRule"/>
</dbReference>
<dbReference type="GO" id="GO:0009234">
    <property type="term" value="P:menaquinone biosynthetic process"/>
    <property type="evidence" value="ECO:0007669"/>
    <property type="project" value="UniProtKB-UniRule"/>
</dbReference>
<dbReference type="GO" id="GO:0032259">
    <property type="term" value="P:methylation"/>
    <property type="evidence" value="ECO:0007669"/>
    <property type="project" value="UniProtKB-KW"/>
</dbReference>
<dbReference type="CDD" id="cd02440">
    <property type="entry name" value="AdoMet_MTases"/>
    <property type="match status" value="1"/>
</dbReference>
<dbReference type="Gene3D" id="3.40.50.150">
    <property type="entry name" value="Vaccinia Virus protein VP39"/>
    <property type="match status" value="1"/>
</dbReference>
<dbReference type="HAMAP" id="MF_01813">
    <property type="entry name" value="MenG_UbiE_methyltr"/>
    <property type="match status" value="1"/>
</dbReference>
<dbReference type="InterPro" id="IPR029063">
    <property type="entry name" value="SAM-dependent_MTases_sf"/>
</dbReference>
<dbReference type="InterPro" id="IPR004033">
    <property type="entry name" value="UbiE/COQ5_MeTrFase"/>
</dbReference>
<dbReference type="InterPro" id="IPR023576">
    <property type="entry name" value="UbiE/COQ5_MeTrFase_CS"/>
</dbReference>
<dbReference type="NCBIfam" id="TIGR01934">
    <property type="entry name" value="MenG_MenH_UbiE"/>
    <property type="match status" value="1"/>
</dbReference>
<dbReference type="NCBIfam" id="NF001244">
    <property type="entry name" value="PRK00216.1-5"/>
    <property type="match status" value="1"/>
</dbReference>
<dbReference type="PANTHER" id="PTHR43591:SF24">
    <property type="entry name" value="2-METHOXY-6-POLYPRENYL-1,4-BENZOQUINOL METHYLASE, MITOCHONDRIAL"/>
    <property type="match status" value="1"/>
</dbReference>
<dbReference type="PANTHER" id="PTHR43591">
    <property type="entry name" value="METHYLTRANSFERASE"/>
    <property type="match status" value="1"/>
</dbReference>
<dbReference type="Pfam" id="PF01209">
    <property type="entry name" value="Ubie_methyltran"/>
    <property type="match status" value="1"/>
</dbReference>
<dbReference type="SUPFAM" id="SSF53335">
    <property type="entry name" value="S-adenosyl-L-methionine-dependent methyltransferases"/>
    <property type="match status" value="1"/>
</dbReference>
<dbReference type="PROSITE" id="PS51608">
    <property type="entry name" value="SAM_MT_UBIE"/>
    <property type="match status" value="1"/>
</dbReference>
<dbReference type="PROSITE" id="PS01183">
    <property type="entry name" value="UBIE_1"/>
    <property type="match status" value="1"/>
</dbReference>
<feature type="chain" id="PRO_1000187769" description="Ubiquinone/menaquinone biosynthesis C-methyltransferase UbiE">
    <location>
        <begin position="1"/>
        <end position="235"/>
    </location>
</feature>
<feature type="binding site" evidence="1">
    <location>
        <position position="60"/>
    </location>
    <ligand>
        <name>S-adenosyl-L-methionine</name>
        <dbReference type="ChEBI" id="CHEBI:59789"/>
    </ligand>
</feature>
<feature type="binding site" evidence="1">
    <location>
        <position position="81"/>
    </location>
    <ligand>
        <name>S-adenosyl-L-methionine</name>
        <dbReference type="ChEBI" id="CHEBI:59789"/>
    </ligand>
</feature>
<feature type="binding site" evidence="1">
    <location>
        <position position="126"/>
    </location>
    <ligand>
        <name>S-adenosyl-L-methionine</name>
        <dbReference type="ChEBI" id="CHEBI:59789"/>
    </ligand>
</feature>
<sequence length="235" mass="26158">MYALSEKGERIRAMFGSIAPRYDLLNRLLSLGIDRRWRRFAVKKIGLNGSGRVLDVATGTGDVALEIASQTPASVSIVGIDFTPEMIELGRVKVKDSRHCGRITLQVAPCEEIPFDDGSFDAATISFGIRNVVDRIKGLAEMHRVLKNDGKIVILEFSTPTLPVFKDLYHFYFLKVLPKIGGAFSRFSAYQYLPDSVLEFPSREVFKGMMTQVGFKDVRHFDLTGGIATVYVGTK</sequence>
<keyword id="KW-0474">Menaquinone biosynthesis</keyword>
<keyword id="KW-0489">Methyltransferase</keyword>
<keyword id="KW-1185">Reference proteome</keyword>
<keyword id="KW-0949">S-adenosyl-L-methionine</keyword>
<keyword id="KW-0808">Transferase</keyword>
<keyword id="KW-0831">Ubiquinone biosynthesis</keyword>
<protein>
    <recommendedName>
        <fullName evidence="1">Ubiquinone/menaquinone biosynthesis C-methyltransferase UbiE</fullName>
        <ecNumber evidence="1">2.1.1.163</ecNumber>
        <ecNumber evidence="1">2.1.1.201</ecNumber>
    </recommendedName>
    <alternativeName>
        <fullName evidence="1">2-methoxy-6-polyprenyl-1,4-benzoquinol methylase</fullName>
    </alternativeName>
    <alternativeName>
        <fullName evidence="1">Demethylmenaquinone methyltransferase</fullName>
    </alternativeName>
</protein>
<proteinExistence type="inferred from homology"/>
<gene>
    <name evidence="1" type="primary">ubiE</name>
    <name type="ordered locus">Gbem_0894</name>
</gene>
<reference key="1">
    <citation type="submission" date="2008-07" db="EMBL/GenBank/DDBJ databases">
        <title>Complete sequence of Geobacter bemidjiensis BEM.</title>
        <authorList>
            <consortium name="US DOE Joint Genome Institute"/>
            <person name="Lucas S."/>
            <person name="Copeland A."/>
            <person name="Lapidus A."/>
            <person name="Glavina del Rio T."/>
            <person name="Dalin E."/>
            <person name="Tice H."/>
            <person name="Bruce D."/>
            <person name="Goodwin L."/>
            <person name="Pitluck S."/>
            <person name="Kiss H."/>
            <person name="Brettin T."/>
            <person name="Detter J.C."/>
            <person name="Han C."/>
            <person name="Kuske C.R."/>
            <person name="Schmutz J."/>
            <person name="Larimer F."/>
            <person name="Land M."/>
            <person name="Hauser L."/>
            <person name="Kyrpides N."/>
            <person name="Lykidis A."/>
            <person name="Lovley D."/>
            <person name="Richardson P."/>
        </authorList>
    </citation>
    <scope>NUCLEOTIDE SEQUENCE [LARGE SCALE GENOMIC DNA]</scope>
    <source>
        <strain>ATCC BAA-1014 / DSM 16622 / JCM 12645 / Bem</strain>
    </source>
</reference>
<evidence type="ECO:0000255" key="1">
    <source>
        <dbReference type="HAMAP-Rule" id="MF_01813"/>
    </source>
</evidence>
<name>UBIE_CITBB</name>